<protein>
    <recommendedName>
        <fullName>Putative D-tyrosyl-tRNA(Tyr) deacylase 2</fullName>
        <ecNumber>3.1.-.-</ecNumber>
    </recommendedName>
</protein>
<dbReference type="EC" id="3.1.-.-"/>
<dbReference type="PDB" id="1TC5">
    <property type="method" value="X-ray"/>
    <property type="resolution" value="1.93 A"/>
    <property type="chains" value="A/B/C/D=1-181"/>
</dbReference>
<dbReference type="PDBsum" id="1TC5"/>
<dbReference type="SMR" id="P84066"/>
<dbReference type="VEuPathDB" id="TriTrypDB:LmjF.34.3360"/>
<dbReference type="VEuPathDB" id="TriTrypDB:LMJFC_340043900"/>
<dbReference type="VEuPathDB" id="TriTrypDB:LMJLV39_340039400"/>
<dbReference type="VEuPathDB" id="TriTrypDB:LMJSD75_340039700"/>
<dbReference type="eggNOG" id="KOG3323">
    <property type="taxonomic scope" value="Eukaryota"/>
</dbReference>
<dbReference type="EvolutionaryTrace" id="P84066"/>
<dbReference type="GO" id="GO:0005737">
    <property type="term" value="C:cytoplasm"/>
    <property type="evidence" value="ECO:0007669"/>
    <property type="project" value="UniProtKB-SubCell"/>
</dbReference>
<dbReference type="GO" id="GO:0051499">
    <property type="term" value="F:D-aminoacyl-tRNA deacylase activity"/>
    <property type="evidence" value="ECO:0007669"/>
    <property type="project" value="InterPro"/>
</dbReference>
<dbReference type="FunFam" id="3.50.80.10:FF:000008">
    <property type="entry name" value="Putative D-tyrosyl-tRNA(Tyr) deacylase 2"/>
    <property type="match status" value="1"/>
</dbReference>
<dbReference type="Gene3D" id="3.50.80.10">
    <property type="entry name" value="D-tyrosyl-tRNA(Tyr) deacylase"/>
    <property type="match status" value="1"/>
</dbReference>
<dbReference type="InterPro" id="IPR003732">
    <property type="entry name" value="Daa-tRNA_deacyls_DTD"/>
</dbReference>
<dbReference type="InterPro" id="IPR023509">
    <property type="entry name" value="DTD-like_sf"/>
</dbReference>
<dbReference type="PANTHER" id="PTHR10472:SF1">
    <property type="entry name" value="D-AMINOACYL-TRNA DEACYLASE 2"/>
    <property type="match status" value="1"/>
</dbReference>
<dbReference type="PANTHER" id="PTHR10472">
    <property type="entry name" value="D-TYROSYL-TRNA TYR DEACYLASE"/>
    <property type="match status" value="1"/>
</dbReference>
<dbReference type="Pfam" id="PF02580">
    <property type="entry name" value="Tyr_Deacylase"/>
    <property type="match status" value="1"/>
</dbReference>
<dbReference type="SUPFAM" id="SSF69500">
    <property type="entry name" value="DTD-like"/>
    <property type="match status" value="1"/>
</dbReference>
<reference evidence="4 5" key="1">
    <citation type="submission" date="2004-06" db="PDB data bank">
        <title>Structural analysis of a probable eukaryotic D-amino acid tRNA deacylase.</title>
        <authorList>
            <person name="Robein M.A."/>
            <person name="Hol W.G.J."/>
        </authorList>
    </citation>
    <scope>X-RAY CRYSTALLOGRAPHY (1.4 ANGSTROMS)</scope>
    <scope>SUBUNIT</scope>
</reference>
<feature type="chain" id="PRO_0000164628" description="Putative D-tyrosyl-tRNA(Tyr) deacylase 2">
    <location>
        <begin position="1"/>
        <end position="181"/>
    </location>
</feature>
<feature type="strand" evidence="6">
    <location>
        <begin position="1"/>
        <end position="11"/>
    </location>
</feature>
<feature type="strand" evidence="6">
    <location>
        <begin position="13"/>
        <end position="16"/>
    </location>
</feature>
<feature type="strand" evidence="6">
    <location>
        <begin position="18"/>
        <end position="21"/>
    </location>
</feature>
<feature type="strand" evidence="6">
    <location>
        <begin position="23"/>
        <end position="32"/>
    </location>
</feature>
<feature type="helix" evidence="6">
    <location>
        <begin position="42"/>
        <end position="54"/>
    </location>
</feature>
<feature type="strand" evidence="6">
    <location>
        <begin position="80"/>
        <end position="85"/>
    </location>
</feature>
<feature type="helix" evidence="6">
    <location>
        <begin position="87"/>
        <end position="90"/>
    </location>
</feature>
<feature type="strand" evidence="6">
    <location>
        <begin position="92"/>
        <end position="94"/>
    </location>
</feature>
<feature type="strand" evidence="6">
    <location>
        <begin position="97"/>
        <end position="99"/>
    </location>
</feature>
<feature type="helix" evidence="6">
    <location>
        <begin position="106"/>
        <end position="123"/>
    </location>
</feature>
<feature type="strand" evidence="6">
    <location>
        <begin position="135"/>
        <end position="139"/>
    </location>
</feature>
<feature type="helix" evidence="6">
    <location>
        <begin position="140"/>
        <end position="142"/>
    </location>
</feature>
<feature type="strand" evidence="6">
    <location>
        <begin position="146"/>
        <end position="148"/>
    </location>
</feature>
<feature type="strand" evidence="6">
    <location>
        <begin position="156"/>
        <end position="158"/>
    </location>
</feature>
<feature type="strand" evidence="6">
    <location>
        <begin position="167"/>
        <end position="172"/>
    </location>
</feature>
<feature type="strand" evidence="6">
    <location>
        <begin position="177"/>
        <end position="181"/>
    </location>
</feature>
<keyword id="KW-0002">3D-structure</keyword>
<keyword id="KW-0963">Cytoplasm</keyword>
<keyword id="KW-0378">Hydrolase</keyword>
<accession>P84066</accession>
<name>DTD2_LEIMA</name>
<sequence length="181" mass="20114">MLQAMDQGHLLVNNVDKYVRAGRGVMVYIAFLSDRDSAPITDEALRHAVGVLLHTKIFTHFSPEKMINQPQSLEECPEMDILIVPQASLGGKVKGRSVQFHQLVAKDVGAALYDRFCHFVRVARGVDESRVDANGAPRSEGDAPKAEGWIKYNSRVISGTFGNRQGLRFESEGPFTHMFDI</sequence>
<comment type="function">
    <text evidence="2">May hydrolyze D-tyrosyl-tRNA(Tyr) into D-tyrosine and free tRNA(Tyr). Could be a defense mechanism against a harmful effect of D-tyrosine (By similarity).</text>
</comment>
<comment type="subunit">
    <text evidence="3">Homodimer.</text>
</comment>
<comment type="subcellular location">
    <subcellularLocation>
        <location evidence="1">Cytoplasm</location>
    </subcellularLocation>
</comment>
<comment type="similarity">
    <text evidence="4">Belongs to the DTD family. Highly divergent.</text>
</comment>
<organism>
    <name type="scientific">Leishmania major</name>
    <dbReference type="NCBI Taxonomy" id="5664"/>
    <lineage>
        <taxon>Eukaryota</taxon>
        <taxon>Discoba</taxon>
        <taxon>Euglenozoa</taxon>
        <taxon>Kinetoplastea</taxon>
        <taxon>Metakinetoplastina</taxon>
        <taxon>Trypanosomatida</taxon>
        <taxon>Trypanosomatidae</taxon>
        <taxon>Leishmaniinae</taxon>
        <taxon>Leishmania</taxon>
    </lineage>
</organism>
<proteinExistence type="evidence at protein level"/>
<evidence type="ECO:0000250" key="1"/>
<evidence type="ECO:0000250" key="2">
    <source>
        <dbReference type="UniProtKB" id="P32147"/>
    </source>
</evidence>
<evidence type="ECO:0000269" key="3">
    <source ref="1"/>
</evidence>
<evidence type="ECO:0000305" key="4"/>
<evidence type="ECO:0000312" key="5">
    <source>
        <dbReference type="PDB" id="1TC5"/>
    </source>
</evidence>
<evidence type="ECO:0007829" key="6">
    <source>
        <dbReference type="PDB" id="1TC5"/>
    </source>
</evidence>